<gene>
    <name evidence="1" type="primary">rpsC</name>
    <name type="ordered locus">SPy_0056</name>
    <name type="ordered locus">M5005_Spy0050</name>
</gene>
<accession>P66555</accession>
<accession>P59185</accession>
<accession>Q491P9</accession>
<accession>Q8K8X2</accession>
<accession>Q9A1W8</accession>
<keyword id="KW-1185">Reference proteome</keyword>
<keyword id="KW-0687">Ribonucleoprotein</keyword>
<keyword id="KW-0689">Ribosomal protein</keyword>
<keyword id="KW-0694">RNA-binding</keyword>
<keyword id="KW-0699">rRNA-binding</keyword>
<comment type="function">
    <text evidence="1">Binds the lower part of the 30S subunit head. Binds mRNA in the 70S ribosome, positioning it for translation.</text>
</comment>
<comment type="subunit">
    <text evidence="1">Part of the 30S ribosomal subunit. Forms a tight complex with proteins S10 and S14.</text>
</comment>
<comment type="similarity">
    <text evidence="1">Belongs to the universal ribosomal protein uS3 family.</text>
</comment>
<feature type="chain" id="PRO_0000130210" description="Small ribosomal subunit protein uS3">
    <location>
        <begin position="1"/>
        <end position="217"/>
    </location>
</feature>
<feature type="domain" description="KH type-2" evidence="1">
    <location>
        <begin position="38"/>
        <end position="106"/>
    </location>
</feature>
<evidence type="ECO:0000255" key="1">
    <source>
        <dbReference type="HAMAP-Rule" id="MF_01309"/>
    </source>
</evidence>
<evidence type="ECO:0000305" key="2"/>
<organism>
    <name type="scientific">Streptococcus pyogenes serotype M1</name>
    <dbReference type="NCBI Taxonomy" id="301447"/>
    <lineage>
        <taxon>Bacteria</taxon>
        <taxon>Bacillati</taxon>
        <taxon>Bacillota</taxon>
        <taxon>Bacilli</taxon>
        <taxon>Lactobacillales</taxon>
        <taxon>Streptococcaceae</taxon>
        <taxon>Streptococcus</taxon>
    </lineage>
</organism>
<dbReference type="EMBL" id="AE004092">
    <property type="protein sequence ID" value="AAK33188.1"/>
    <property type="molecule type" value="Genomic_DNA"/>
</dbReference>
<dbReference type="EMBL" id="CP000017">
    <property type="protein sequence ID" value="AAZ50669.1"/>
    <property type="molecule type" value="Genomic_DNA"/>
</dbReference>
<dbReference type="RefSeq" id="NP_268466.1">
    <property type="nucleotide sequence ID" value="NC_002737.2"/>
</dbReference>
<dbReference type="SMR" id="P66555"/>
<dbReference type="PaxDb" id="1314-HKU360_00083"/>
<dbReference type="KEGG" id="spy:SPy_0056"/>
<dbReference type="KEGG" id="spz:M5005_Spy0050"/>
<dbReference type="PATRIC" id="fig|160490.10.peg.50"/>
<dbReference type="HOGENOM" id="CLU_058591_0_2_9"/>
<dbReference type="OMA" id="KTNPIGN"/>
<dbReference type="PRO" id="PR:P66555"/>
<dbReference type="Proteomes" id="UP000000750">
    <property type="component" value="Chromosome"/>
</dbReference>
<dbReference type="GO" id="GO:0022627">
    <property type="term" value="C:cytosolic small ribosomal subunit"/>
    <property type="evidence" value="ECO:0007669"/>
    <property type="project" value="TreeGrafter"/>
</dbReference>
<dbReference type="GO" id="GO:0003729">
    <property type="term" value="F:mRNA binding"/>
    <property type="evidence" value="ECO:0007669"/>
    <property type="project" value="UniProtKB-UniRule"/>
</dbReference>
<dbReference type="GO" id="GO:0019843">
    <property type="term" value="F:rRNA binding"/>
    <property type="evidence" value="ECO:0007669"/>
    <property type="project" value="UniProtKB-UniRule"/>
</dbReference>
<dbReference type="GO" id="GO:0003735">
    <property type="term" value="F:structural constituent of ribosome"/>
    <property type="evidence" value="ECO:0007669"/>
    <property type="project" value="InterPro"/>
</dbReference>
<dbReference type="GO" id="GO:0006412">
    <property type="term" value="P:translation"/>
    <property type="evidence" value="ECO:0007669"/>
    <property type="project" value="UniProtKB-UniRule"/>
</dbReference>
<dbReference type="CDD" id="cd02412">
    <property type="entry name" value="KH-II_30S_S3"/>
    <property type="match status" value="1"/>
</dbReference>
<dbReference type="FunFam" id="3.30.1140.32:FF:000001">
    <property type="entry name" value="30S ribosomal protein S3"/>
    <property type="match status" value="1"/>
</dbReference>
<dbReference type="FunFam" id="3.30.300.20:FF:000001">
    <property type="entry name" value="30S ribosomal protein S3"/>
    <property type="match status" value="1"/>
</dbReference>
<dbReference type="Gene3D" id="3.30.300.20">
    <property type="match status" value="1"/>
</dbReference>
<dbReference type="Gene3D" id="3.30.1140.32">
    <property type="entry name" value="Ribosomal protein S3, C-terminal domain"/>
    <property type="match status" value="1"/>
</dbReference>
<dbReference type="HAMAP" id="MF_01309_B">
    <property type="entry name" value="Ribosomal_uS3_B"/>
    <property type="match status" value="1"/>
</dbReference>
<dbReference type="InterPro" id="IPR004087">
    <property type="entry name" value="KH_dom"/>
</dbReference>
<dbReference type="InterPro" id="IPR015946">
    <property type="entry name" value="KH_dom-like_a/b"/>
</dbReference>
<dbReference type="InterPro" id="IPR004044">
    <property type="entry name" value="KH_dom_type_2"/>
</dbReference>
<dbReference type="InterPro" id="IPR009019">
    <property type="entry name" value="KH_sf_prok-type"/>
</dbReference>
<dbReference type="InterPro" id="IPR036419">
    <property type="entry name" value="Ribosomal_S3_C_sf"/>
</dbReference>
<dbReference type="InterPro" id="IPR005704">
    <property type="entry name" value="Ribosomal_uS3_bac-typ"/>
</dbReference>
<dbReference type="InterPro" id="IPR001351">
    <property type="entry name" value="Ribosomal_uS3_C"/>
</dbReference>
<dbReference type="InterPro" id="IPR018280">
    <property type="entry name" value="Ribosomal_uS3_CS"/>
</dbReference>
<dbReference type="NCBIfam" id="TIGR01009">
    <property type="entry name" value="rpsC_bact"/>
    <property type="match status" value="1"/>
</dbReference>
<dbReference type="PANTHER" id="PTHR11760">
    <property type="entry name" value="30S/40S RIBOSOMAL PROTEIN S3"/>
    <property type="match status" value="1"/>
</dbReference>
<dbReference type="PANTHER" id="PTHR11760:SF19">
    <property type="entry name" value="SMALL RIBOSOMAL SUBUNIT PROTEIN US3C"/>
    <property type="match status" value="1"/>
</dbReference>
<dbReference type="Pfam" id="PF07650">
    <property type="entry name" value="KH_2"/>
    <property type="match status" value="1"/>
</dbReference>
<dbReference type="Pfam" id="PF00189">
    <property type="entry name" value="Ribosomal_S3_C"/>
    <property type="match status" value="1"/>
</dbReference>
<dbReference type="SMART" id="SM00322">
    <property type="entry name" value="KH"/>
    <property type="match status" value="1"/>
</dbReference>
<dbReference type="SUPFAM" id="SSF54814">
    <property type="entry name" value="Prokaryotic type KH domain (KH-domain type II)"/>
    <property type="match status" value="1"/>
</dbReference>
<dbReference type="SUPFAM" id="SSF54821">
    <property type="entry name" value="Ribosomal protein S3 C-terminal domain"/>
    <property type="match status" value="1"/>
</dbReference>
<dbReference type="PROSITE" id="PS50823">
    <property type="entry name" value="KH_TYPE_2"/>
    <property type="match status" value="1"/>
</dbReference>
<dbReference type="PROSITE" id="PS00548">
    <property type="entry name" value="RIBOSOMAL_S3"/>
    <property type="match status" value="1"/>
</dbReference>
<reference key="1">
    <citation type="journal article" date="2001" name="Proc. Natl. Acad. Sci. U.S.A.">
        <title>Complete genome sequence of an M1 strain of Streptococcus pyogenes.</title>
        <authorList>
            <person name="Ferretti J.J."/>
            <person name="McShan W.M."/>
            <person name="Ajdic D.J."/>
            <person name="Savic D.J."/>
            <person name="Savic G."/>
            <person name="Lyon K."/>
            <person name="Primeaux C."/>
            <person name="Sezate S."/>
            <person name="Suvorov A.N."/>
            <person name="Kenton S."/>
            <person name="Lai H.S."/>
            <person name="Lin S.P."/>
            <person name="Qian Y."/>
            <person name="Jia H.G."/>
            <person name="Najar F.Z."/>
            <person name="Ren Q."/>
            <person name="Zhu H."/>
            <person name="Song L."/>
            <person name="White J."/>
            <person name="Yuan X."/>
            <person name="Clifton S.W."/>
            <person name="Roe B.A."/>
            <person name="McLaughlin R.E."/>
        </authorList>
    </citation>
    <scope>NUCLEOTIDE SEQUENCE [LARGE SCALE GENOMIC DNA]</scope>
    <source>
        <strain>ATCC 700294 / SF370 / Serotype M1</strain>
    </source>
</reference>
<reference key="2">
    <citation type="journal article" date="2005" name="J. Infect. Dis.">
        <title>Evolutionary origin and emergence of a highly successful clone of serotype M1 group A Streptococcus involved multiple horizontal gene transfer events.</title>
        <authorList>
            <person name="Sumby P."/>
            <person name="Porcella S.F."/>
            <person name="Madrigal A.G."/>
            <person name="Barbian K.D."/>
            <person name="Virtaneva K."/>
            <person name="Ricklefs S.M."/>
            <person name="Sturdevant D.E."/>
            <person name="Graham M.R."/>
            <person name="Vuopio-Varkila J."/>
            <person name="Hoe N.P."/>
            <person name="Musser J.M."/>
        </authorList>
    </citation>
    <scope>NUCLEOTIDE SEQUENCE [LARGE SCALE GENOMIC DNA]</scope>
    <source>
        <strain>ATCC BAA-947 / MGAS5005 / Serotype M1</strain>
    </source>
</reference>
<name>RS3_STRP1</name>
<sequence length="217" mass="24134">MGQKVHPIGMRVGIIRDWDAKWYAEKEYADYLHEDLAIRKFINKELADASVSTIEIERAVNKVIVSLHTAKPGMVIGKGGANVDALRGQLNKLTGKQVHINIIEIKQPDLDAHLVGENIARQLEQRVAFRRAQKQAIQRTMRAGAKGIKTQVSGRLNGADIARAEGYSEGTVPLHTLRADIDYAWEEADTTYGKLGVKVWIYRGEVLPARKNTKGGK</sequence>
<protein>
    <recommendedName>
        <fullName evidence="1">Small ribosomal subunit protein uS3</fullName>
    </recommendedName>
    <alternativeName>
        <fullName evidence="2">30S ribosomal protein S3</fullName>
    </alternativeName>
</protein>
<proteinExistence type="inferred from homology"/>